<gene>
    <name type="primary">GH2</name>
</gene>
<organism>
    <name type="scientific">Pan troglodytes</name>
    <name type="common">Chimpanzee</name>
    <dbReference type="NCBI Taxonomy" id="9598"/>
    <lineage>
        <taxon>Eukaryota</taxon>
        <taxon>Metazoa</taxon>
        <taxon>Chordata</taxon>
        <taxon>Craniata</taxon>
        <taxon>Vertebrata</taxon>
        <taxon>Euteleostomi</taxon>
        <taxon>Mammalia</taxon>
        <taxon>Eutheria</taxon>
        <taxon>Euarchontoglires</taxon>
        <taxon>Primates</taxon>
        <taxon>Haplorrhini</taxon>
        <taxon>Catarrhini</taxon>
        <taxon>Hominidae</taxon>
        <taxon>Pan</taxon>
    </lineage>
</organism>
<accession>P58757</accession>
<evidence type="ECO:0000250" key="1"/>
<evidence type="ECO:0000250" key="2">
    <source>
        <dbReference type="UniProtKB" id="P01241"/>
    </source>
</evidence>
<evidence type="ECO:0000255" key="3"/>
<evidence type="ECO:0000305" key="4"/>
<comment type="function">
    <text>Plays an important role in growth control. Its major role in stimulating body growth is to stimulate the liver and other tissues to secrete IGF1. It stimulates both the differentiation and proliferation of myoblasts. It also stimulates amino acid uptake and protein synthesis in muscle and other tissues.</text>
</comment>
<comment type="subcellular location">
    <subcellularLocation>
        <location>Secreted</location>
    </subcellularLocation>
</comment>
<comment type="tissue specificity">
    <text>Expressed in the placenta.</text>
</comment>
<comment type="similarity">
    <text evidence="4">Belongs to the somatotropin/prolactin family.</text>
</comment>
<protein>
    <recommendedName>
        <fullName>Growth hormone variant</fullName>
        <shortName>GH-V</shortName>
    </recommendedName>
    <alternativeName>
        <fullName>Growth hormone 2</fullName>
    </alternativeName>
    <alternativeName>
        <fullName>Placenta-specific growth hormone</fullName>
    </alternativeName>
</protein>
<keyword id="KW-1015">Disulfide bond</keyword>
<keyword id="KW-0325">Glycoprotein</keyword>
<keyword id="KW-0372">Hormone</keyword>
<keyword id="KW-0597">Phosphoprotein</keyword>
<keyword id="KW-1185">Reference proteome</keyword>
<keyword id="KW-0964">Secreted</keyword>
<keyword id="KW-0732">Signal</keyword>
<feature type="signal peptide" evidence="1">
    <location>
        <begin position="1"/>
        <end position="26"/>
    </location>
</feature>
<feature type="chain" id="PRO_0000033063" description="Growth hormone variant">
    <location>
        <begin position="27"/>
        <end position="217"/>
    </location>
</feature>
<feature type="modified residue" description="Phosphoserine" evidence="2">
    <location>
        <position position="132"/>
    </location>
</feature>
<feature type="modified residue" description="Phosphoserine" evidence="2">
    <location>
        <position position="176"/>
    </location>
</feature>
<feature type="glycosylation site" description="N-linked (GlcNAc...) asparagine" evidence="3">
    <location>
        <position position="166"/>
    </location>
</feature>
<feature type="disulfide bond" evidence="1">
    <location>
        <begin position="79"/>
        <end position="191"/>
    </location>
</feature>
<feature type="disulfide bond" evidence="1">
    <location>
        <begin position="208"/>
        <end position="215"/>
    </location>
</feature>
<name>SOM2_PANTR</name>
<sequence length="217" mass="24991">MAAGSRTSLLLAFGLLCLPWLQEGSAFPTIPLSRLFDNAMLRAHRLYQLAYDTYQEFEEAYILKEQKYSFLQNPQTSLCFSESIPTPSNRVKTQQKSNLELLRISLLLIQSWLEPVQLLRSVFANSLVYGASDSNVYRHLKDLEEGIQTLMWRLEDGSPRTGQIFNQSYSKFDTKSHNDDALLKNYGLLYCFRKDMDKVETFLRIVQCRSVEGSCGF</sequence>
<reference key="1">
    <citation type="submission" date="2001-04" db="EMBL/GenBank/DDBJ databases">
        <title>Independent duplication of the growth hormone gene in three Anthropoidean lineages.</title>
        <authorList>
            <person name="Revol A."/>
            <person name="Esquivel D."/>
            <person name="Santiago D."/>
            <person name="Barrera-Saldana H."/>
        </authorList>
    </citation>
    <scope>NUCLEOTIDE SEQUENCE [GENOMIC DNA]</scope>
</reference>
<proteinExistence type="evidence at transcript level"/>
<dbReference type="EMBL" id="AF374233">
    <property type="protein sequence ID" value="AAL72285.1"/>
    <property type="molecule type" value="Genomic_DNA"/>
</dbReference>
<dbReference type="RefSeq" id="NP_001184097.1">
    <property type="nucleotide sequence ID" value="NM_001197168.1"/>
</dbReference>
<dbReference type="SMR" id="P58757"/>
<dbReference type="FunCoup" id="P58757">
    <property type="interactions" value="1037"/>
</dbReference>
<dbReference type="STRING" id="9598.ENSPTRP00000016186"/>
<dbReference type="GlyCosmos" id="P58757">
    <property type="glycosylation" value="1 site, No reported glycans"/>
</dbReference>
<dbReference type="PaxDb" id="9598-ENSPTRP00000056409"/>
<dbReference type="GeneID" id="100505396"/>
<dbReference type="KEGG" id="ptr:100505396"/>
<dbReference type="CTD" id="2689"/>
<dbReference type="eggNOG" id="ENOG502R5GJ">
    <property type="taxonomic scope" value="Eukaryota"/>
</dbReference>
<dbReference type="InParanoid" id="P58757"/>
<dbReference type="Proteomes" id="UP000002277">
    <property type="component" value="Unplaced"/>
</dbReference>
<dbReference type="GO" id="GO:0005615">
    <property type="term" value="C:extracellular space"/>
    <property type="evidence" value="ECO:0000318"/>
    <property type="project" value="GO_Central"/>
</dbReference>
<dbReference type="GO" id="GO:0008083">
    <property type="term" value="F:growth factor activity"/>
    <property type="evidence" value="ECO:0000318"/>
    <property type="project" value="GO_Central"/>
</dbReference>
<dbReference type="GO" id="GO:0005131">
    <property type="term" value="F:growth hormone receptor binding"/>
    <property type="evidence" value="ECO:0000318"/>
    <property type="project" value="GO_Central"/>
</dbReference>
<dbReference type="GO" id="GO:0005179">
    <property type="term" value="F:hormone activity"/>
    <property type="evidence" value="ECO:0000318"/>
    <property type="project" value="GO_Central"/>
</dbReference>
<dbReference type="GO" id="GO:0048513">
    <property type="term" value="P:animal organ development"/>
    <property type="evidence" value="ECO:0000318"/>
    <property type="project" value="GO_Central"/>
</dbReference>
<dbReference type="GO" id="GO:0060396">
    <property type="term" value="P:growth hormone receptor signaling pathway"/>
    <property type="evidence" value="ECO:0000318"/>
    <property type="project" value="GO_Central"/>
</dbReference>
<dbReference type="GO" id="GO:0046427">
    <property type="term" value="P:positive regulation of receptor signaling pathway via JAK-STAT"/>
    <property type="evidence" value="ECO:0000318"/>
    <property type="project" value="GO_Central"/>
</dbReference>
<dbReference type="GO" id="GO:0031667">
    <property type="term" value="P:response to nutrient levels"/>
    <property type="evidence" value="ECO:0000318"/>
    <property type="project" value="GO_Central"/>
</dbReference>
<dbReference type="CDD" id="cd10285">
    <property type="entry name" value="somatotropin_like"/>
    <property type="match status" value="1"/>
</dbReference>
<dbReference type="FunFam" id="1.20.1250.10:FF:000012">
    <property type="entry name" value="Growth hormone 1"/>
    <property type="match status" value="1"/>
</dbReference>
<dbReference type="Gene3D" id="1.20.1250.10">
    <property type="match status" value="1"/>
</dbReference>
<dbReference type="InterPro" id="IPR009079">
    <property type="entry name" value="4_helix_cytokine-like_core"/>
</dbReference>
<dbReference type="InterPro" id="IPR034975">
    <property type="entry name" value="Somatotropin"/>
</dbReference>
<dbReference type="InterPro" id="IPR001400">
    <property type="entry name" value="Somatotropin/Prolactin"/>
</dbReference>
<dbReference type="InterPro" id="IPR018116">
    <property type="entry name" value="Somatotropin_CS"/>
</dbReference>
<dbReference type="PANTHER" id="PTHR11417:SF40">
    <property type="entry name" value="GROWTH HORMONE VARIANT"/>
    <property type="match status" value="1"/>
</dbReference>
<dbReference type="PANTHER" id="PTHR11417">
    <property type="entry name" value="SOMATOTROPIN,PROLACTIN"/>
    <property type="match status" value="1"/>
</dbReference>
<dbReference type="Pfam" id="PF00103">
    <property type="entry name" value="Hormone_1"/>
    <property type="match status" value="1"/>
</dbReference>
<dbReference type="PRINTS" id="PR00836">
    <property type="entry name" value="SOMATOTROPIN"/>
</dbReference>
<dbReference type="SUPFAM" id="SSF47266">
    <property type="entry name" value="4-helical cytokines"/>
    <property type="match status" value="1"/>
</dbReference>
<dbReference type="PROSITE" id="PS00266">
    <property type="entry name" value="SOMATOTROPIN_1"/>
    <property type="match status" value="1"/>
</dbReference>
<dbReference type="PROSITE" id="PS00338">
    <property type="entry name" value="SOMATOTROPIN_2"/>
    <property type="match status" value="1"/>
</dbReference>